<comment type="subunit">
    <text evidence="1">Forms oligomers.</text>
</comment>
<comment type="subcellular location">
    <subcellularLocation>
        <location evidence="1">Cytoplasm</location>
        <location evidence="1">Nucleoid</location>
    </subcellularLocation>
</comment>
<comment type="similarity">
    <text evidence="1">Belongs to the MraZ family.</text>
</comment>
<keyword id="KW-0963">Cytoplasm</keyword>
<keyword id="KW-0238">DNA-binding</keyword>
<keyword id="KW-1185">Reference proteome</keyword>
<keyword id="KW-0677">Repeat</keyword>
<keyword id="KW-0804">Transcription</keyword>
<keyword id="KW-0805">Transcription regulation</keyword>
<evidence type="ECO:0000255" key="1">
    <source>
        <dbReference type="HAMAP-Rule" id="MF_01008"/>
    </source>
</evidence>
<evidence type="ECO:0000255" key="2">
    <source>
        <dbReference type="PROSITE-ProRule" id="PRU01076"/>
    </source>
</evidence>
<dbReference type="EMBL" id="CP000924">
    <property type="protein sequence ID" value="ABY94461.1"/>
    <property type="molecule type" value="Genomic_DNA"/>
</dbReference>
<dbReference type="RefSeq" id="WP_012269182.1">
    <property type="nucleotide sequence ID" value="NC_010321.1"/>
</dbReference>
<dbReference type="SMR" id="B0K8J8"/>
<dbReference type="STRING" id="340099.Teth39_0804"/>
<dbReference type="KEGG" id="tpd:Teth39_0804"/>
<dbReference type="eggNOG" id="COG2001">
    <property type="taxonomic scope" value="Bacteria"/>
</dbReference>
<dbReference type="HOGENOM" id="CLU_107907_0_5_9"/>
<dbReference type="Proteomes" id="UP000002156">
    <property type="component" value="Chromosome"/>
</dbReference>
<dbReference type="GO" id="GO:0005737">
    <property type="term" value="C:cytoplasm"/>
    <property type="evidence" value="ECO:0007669"/>
    <property type="project" value="UniProtKB-UniRule"/>
</dbReference>
<dbReference type="GO" id="GO:0009295">
    <property type="term" value="C:nucleoid"/>
    <property type="evidence" value="ECO:0007669"/>
    <property type="project" value="UniProtKB-SubCell"/>
</dbReference>
<dbReference type="GO" id="GO:0003700">
    <property type="term" value="F:DNA-binding transcription factor activity"/>
    <property type="evidence" value="ECO:0007669"/>
    <property type="project" value="UniProtKB-UniRule"/>
</dbReference>
<dbReference type="GO" id="GO:0000976">
    <property type="term" value="F:transcription cis-regulatory region binding"/>
    <property type="evidence" value="ECO:0007669"/>
    <property type="project" value="TreeGrafter"/>
</dbReference>
<dbReference type="GO" id="GO:2000143">
    <property type="term" value="P:negative regulation of DNA-templated transcription initiation"/>
    <property type="evidence" value="ECO:0007669"/>
    <property type="project" value="TreeGrafter"/>
</dbReference>
<dbReference type="CDD" id="cd16321">
    <property type="entry name" value="MraZ_C"/>
    <property type="match status" value="1"/>
</dbReference>
<dbReference type="CDD" id="cd16320">
    <property type="entry name" value="MraZ_N"/>
    <property type="match status" value="1"/>
</dbReference>
<dbReference type="FunFam" id="3.40.1550.20:FF:000002">
    <property type="entry name" value="Transcriptional regulator MraZ"/>
    <property type="match status" value="1"/>
</dbReference>
<dbReference type="Gene3D" id="3.40.1550.20">
    <property type="entry name" value="Transcriptional regulator MraZ domain"/>
    <property type="match status" value="1"/>
</dbReference>
<dbReference type="HAMAP" id="MF_01008">
    <property type="entry name" value="MraZ"/>
    <property type="match status" value="1"/>
</dbReference>
<dbReference type="InterPro" id="IPR003444">
    <property type="entry name" value="MraZ"/>
</dbReference>
<dbReference type="InterPro" id="IPR035644">
    <property type="entry name" value="MraZ_C"/>
</dbReference>
<dbReference type="InterPro" id="IPR020603">
    <property type="entry name" value="MraZ_dom"/>
</dbReference>
<dbReference type="InterPro" id="IPR035642">
    <property type="entry name" value="MraZ_N"/>
</dbReference>
<dbReference type="InterPro" id="IPR038619">
    <property type="entry name" value="MraZ_sf"/>
</dbReference>
<dbReference type="InterPro" id="IPR007159">
    <property type="entry name" value="SpoVT-AbrB_dom"/>
</dbReference>
<dbReference type="InterPro" id="IPR037914">
    <property type="entry name" value="SpoVT-AbrB_sf"/>
</dbReference>
<dbReference type="NCBIfam" id="TIGR00242">
    <property type="entry name" value="division/cell wall cluster transcriptional repressor MraZ"/>
    <property type="match status" value="1"/>
</dbReference>
<dbReference type="PANTHER" id="PTHR34701">
    <property type="entry name" value="TRANSCRIPTIONAL REGULATOR MRAZ"/>
    <property type="match status" value="1"/>
</dbReference>
<dbReference type="PANTHER" id="PTHR34701:SF1">
    <property type="entry name" value="TRANSCRIPTIONAL REGULATOR MRAZ"/>
    <property type="match status" value="1"/>
</dbReference>
<dbReference type="Pfam" id="PF02381">
    <property type="entry name" value="MraZ"/>
    <property type="match status" value="2"/>
</dbReference>
<dbReference type="SUPFAM" id="SSF89447">
    <property type="entry name" value="AbrB/MazE/MraZ-like"/>
    <property type="match status" value="1"/>
</dbReference>
<dbReference type="PROSITE" id="PS51740">
    <property type="entry name" value="SPOVT_ABRB"/>
    <property type="match status" value="2"/>
</dbReference>
<sequence length="143" mass="16517">MLMGQYEHTIDAKGRVIIPAKFRGELGDRFVLTKGLDNCLFVYSLEEWKNIEAKLKTLPLTKKDARAFTRFFLAGAVECEIDKQGRILIPANLREHAKIEKDVIFIGVSTRVEIWSKEVWEEYSNNTDVSFEEIAEHLDELNI</sequence>
<organism>
    <name type="scientific">Thermoanaerobacter pseudethanolicus (strain ATCC 33223 / 39E)</name>
    <name type="common">Clostridium thermohydrosulfuricum</name>
    <dbReference type="NCBI Taxonomy" id="340099"/>
    <lineage>
        <taxon>Bacteria</taxon>
        <taxon>Bacillati</taxon>
        <taxon>Bacillota</taxon>
        <taxon>Clostridia</taxon>
        <taxon>Thermoanaerobacterales</taxon>
        <taxon>Thermoanaerobacteraceae</taxon>
        <taxon>Thermoanaerobacter</taxon>
    </lineage>
</organism>
<accession>B0K8J8</accession>
<reference key="1">
    <citation type="submission" date="2008-01" db="EMBL/GenBank/DDBJ databases">
        <title>Complete sequence of Thermoanaerobacter pseudethanolicus 39E.</title>
        <authorList>
            <person name="Copeland A."/>
            <person name="Lucas S."/>
            <person name="Lapidus A."/>
            <person name="Barry K."/>
            <person name="Glavina del Rio T."/>
            <person name="Dalin E."/>
            <person name="Tice H."/>
            <person name="Pitluck S."/>
            <person name="Bruce D."/>
            <person name="Goodwin L."/>
            <person name="Saunders E."/>
            <person name="Brettin T."/>
            <person name="Detter J.C."/>
            <person name="Han C."/>
            <person name="Schmutz J."/>
            <person name="Larimer F."/>
            <person name="Land M."/>
            <person name="Hauser L."/>
            <person name="Kyrpides N."/>
            <person name="Lykidis A."/>
            <person name="Hemme C."/>
            <person name="Fields M.W."/>
            <person name="He Z."/>
            <person name="Zhou J."/>
            <person name="Richardson P."/>
        </authorList>
    </citation>
    <scope>NUCLEOTIDE SEQUENCE [LARGE SCALE GENOMIC DNA]</scope>
    <source>
        <strain>ATCC 33223 / DSM 2355 / 39E</strain>
    </source>
</reference>
<proteinExistence type="inferred from homology"/>
<gene>
    <name evidence="1" type="primary">mraZ</name>
    <name type="ordered locus">Teth39_0804</name>
</gene>
<protein>
    <recommendedName>
        <fullName>Transcriptional regulator MraZ</fullName>
    </recommendedName>
</protein>
<name>MRAZ_THEP3</name>
<feature type="chain" id="PRO_1000191338" description="Transcriptional regulator MraZ">
    <location>
        <begin position="1"/>
        <end position="143"/>
    </location>
</feature>
<feature type="domain" description="SpoVT-AbrB 1" evidence="2">
    <location>
        <begin position="5"/>
        <end position="47"/>
    </location>
</feature>
<feature type="domain" description="SpoVT-AbrB 2" evidence="2">
    <location>
        <begin position="76"/>
        <end position="119"/>
    </location>
</feature>